<reference key="1">
    <citation type="journal article" date="2008" name="J. Bacteriol.">
        <title>The complete genome sequence of Escherichia coli DH10B: insights into the biology of a laboratory workhorse.</title>
        <authorList>
            <person name="Durfee T."/>
            <person name="Nelson R."/>
            <person name="Baldwin S."/>
            <person name="Plunkett G. III"/>
            <person name="Burland V."/>
            <person name="Mau B."/>
            <person name="Petrosino J.F."/>
            <person name="Qin X."/>
            <person name="Muzny D.M."/>
            <person name="Ayele M."/>
            <person name="Gibbs R.A."/>
            <person name="Csorgo B."/>
            <person name="Posfai G."/>
            <person name="Weinstock G.M."/>
            <person name="Blattner F.R."/>
        </authorList>
    </citation>
    <scope>NUCLEOTIDE SEQUENCE [LARGE SCALE GENOMIC DNA]</scope>
    <source>
        <strain>K12 / DH10B</strain>
    </source>
</reference>
<dbReference type="EC" id="3.1.26.3" evidence="1"/>
<dbReference type="EMBL" id="CP000948">
    <property type="protein sequence ID" value="ACB03718.1"/>
    <property type="molecule type" value="Genomic_DNA"/>
</dbReference>
<dbReference type="RefSeq" id="WP_001068343.1">
    <property type="nucleotide sequence ID" value="NC_010473.1"/>
</dbReference>
<dbReference type="SMR" id="B1XB41"/>
<dbReference type="GeneID" id="93774524"/>
<dbReference type="KEGG" id="ecd:ECDH10B_2735"/>
<dbReference type="HOGENOM" id="CLU_000907_1_1_6"/>
<dbReference type="BRENDA" id="3.1.26.3">
    <property type="organism ID" value="2026"/>
</dbReference>
<dbReference type="GO" id="GO:0005737">
    <property type="term" value="C:cytoplasm"/>
    <property type="evidence" value="ECO:0007669"/>
    <property type="project" value="UniProtKB-SubCell"/>
</dbReference>
<dbReference type="GO" id="GO:0003725">
    <property type="term" value="F:double-stranded RNA binding"/>
    <property type="evidence" value="ECO:0007669"/>
    <property type="project" value="TreeGrafter"/>
</dbReference>
<dbReference type="GO" id="GO:0046872">
    <property type="term" value="F:metal ion binding"/>
    <property type="evidence" value="ECO:0007669"/>
    <property type="project" value="UniProtKB-KW"/>
</dbReference>
<dbReference type="GO" id="GO:0004525">
    <property type="term" value="F:ribonuclease III activity"/>
    <property type="evidence" value="ECO:0007669"/>
    <property type="project" value="UniProtKB-UniRule"/>
</dbReference>
<dbReference type="GO" id="GO:0019843">
    <property type="term" value="F:rRNA binding"/>
    <property type="evidence" value="ECO:0007669"/>
    <property type="project" value="UniProtKB-KW"/>
</dbReference>
<dbReference type="GO" id="GO:0006397">
    <property type="term" value="P:mRNA processing"/>
    <property type="evidence" value="ECO:0007669"/>
    <property type="project" value="UniProtKB-UniRule"/>
</dbReference>
<dbReference type="GO" id="GO:0010468">
    <property type="term" value="P:regulation of gene expression"/>
    <property type="evidence" value="ECO:0007669"/>
    <property type="project" value="TreeGrafter"/>
</dbReference>
<dbReference type="GO" id="GO:0006364">
    <property type="term" value="P:rRNA processing"/>
    <property type="evidence" value="ECO:0007669"/>
    <property type="project" value="UniProtKB-UniRule"/>
</dbReference>
<dbReference type="GO" id="GO:0008033">
    <property type="term" value="P:tRNA processing"/>
    <property type="evidence" value="ECO:0007669"/>
    <property type="project" value="UniProtKB-KW"/>
</dbReference>
<dbReference type="CDD" id="cd10845">
    <property type="entry name" value="DSRM_RNAse_III_family"/>
    <property type="match status" value="1"/>
</dbReference>
<dbReference type="CDD" id="cd00593">
    <property type="entry name" value="RIBOc"/>
    <property type="match status" value="1"/>
</dbReference>
<dbReference type="FunFam" id="1.10.1520.10:FF:000001">
    <property type="entry name" value="Ribonuclease 3"/>
    <property type="match status" value="1"/>
</dbReference>
<dbReference type="FunFam" id="3.30.160.20:FF:000003">
    <property type="entry name" value="Ribonuclease 3"/>
    <property type="match status" value="1"/>
</dbReference>
<dbReference type="Gene3D" id="3.30.160.20">
    <property type="match status" value="1"/>
</dbReference>
<dbReference type="Gene3D" id="1.10.1520.10">
    <property type="entry name" value="Ribonuclease III domain"/>
    <property type="match status" value="1"/>
</dbReference>
<dbReference type="HAMAP" id="MF_00104">
    <property type="entry name" value="RNase_III"/>
    <property type="match status" value="1"/>
</dbReference>
<dbReference type="InterPro" id="IPR014720">
    <property type="entry name" value="dsRBD_dom"/>
</dbReference>
<dbReference type="InterPro" id="IPR011907">
    <property type="entry name" value="RNase_III"/>
</dbReference>
<dbReference type="InterPro" id="IPR000999">
    <property type="entry name" value="RNase_III_dom"/>
</dbReference>
<dbReference type="InterPro" id="IPR036389">
    <property type="entry name" value="RNase_III_sf"/>
</dbReference>
<dbReference type="NCBIfam" id="TIGR02191">
    <property type="entry name" value="RNaseIII"/>
    <property type="match status" value="1"/>
</dbReference>
<dbReference type="PANTHER" id="PTHR11207:SF0">
    <property type="entry name" value="RIBONUCLEASE 3"/>
    <property type="match status" value="1"/>
</dbReference>
<dbReference type="PANTHER" id="PTHR11207">
    <property type="entry name" value="RIBONUCLEASE III"/>
    <property type="match status" value="1"/>
</dbReference>
<dbReference type="Pfam" id="PF00035">
    <property type="entry name" value="dsrm"/>
    <property type="match status" value="1"/>
</dbReference>
<dbReference type="Pfam" id="PF14622">
    <property type="entry name" value="Ribonucleas_3_3"/>
    <property type="match status" value="1"/>
</dbReference>
<dbReference type="SMART" id="SM00358">
    <property type="entry name" value="DSRM"/>
    <property type="match status" value="1"/>
</dbReference>
<dbReference type="SMART" id="SM00535">
    <property type="entry name" value="RIBOc"/>
    <property type="match status" value="1"/>
</dbReference>
<dbReference type="SUPFAM" id="SSF54768">
    <property type="entry name" value="dsRNA-binding domain-like"/>
    <property type="match status" value="1"/>
</dbReference>
<dbReference type="SUPFAM" id="SSF69065">
    <property type="entry name" value="RNase III domain-like"/>
    <property type="match status" value="1"/>
</dbReference>
<dbReference type="PROSITE" id="PS50137">
    <property type="entry name" value="DS_RBD"/>
    <property type="match status" value="1"/>
</dbReference>
<dbReference type="PROSITE" id="PS00517">
    <property type="entry name" value="RNASE_3_1"/>
    <property type="match status" value="1"/>
</dbReference>
<dbReference type="PROSITE" id="PS50142">
    <property type="entry name" value="RNASE_3_2"/>
    <property type="match status" value="1"/>
</dbReference>
<evidence type="ECO:0000255" key="1">
    <source>
        <dbReference type="HAMAP-Rule" id="MF_00104"/>
    </source>
</evidence>
<gene>
    <name evidence="1" type="primary">rnc</name>
    <name type="ordered locus">ECDH10B_2735</name>
</gene>
<keyword id="KW-0963">Cytoplasm</keyword>
<keyword id="KW-0255">Endonuclease</keyword>
<keyword id="KW-0378">Hydrolase</keyword>
<keyword id="KW-0460">Magnesium</keyword>
<keyword id="KW-0479">Metal-binding</keyword>
<keyword id="KW-0507">mRNA processing</keyword>
<keyword id="KW-0540">Nuclease</keyword>
<keyword id="KW-0694">RNA-binding</keyword>
<keyword id="KW-0698">rRNA processing</keyword>
<keyword id="KW-0699">rRNA-binding</keyword>
<keyword id="KW-0819">tRNA processing</keyword>
<comment type="function">
    <text evidence="1">Digests double-stranded RNA. Involved in the processing of primary rRNA transcript to yield the immediate precursors to the large and small rRNAs (23S and 16S). Processes some mRNAs, and tRNAs when they are encoded in the rRNA operon. Processes pre-crRNA and tracrRNA of type II CRISPR loci if present in the organism.</text>
</comment>
<comment type="catalytic activity">
    <reaction evidence="1">
        <text>Endonucleolytic cleavage to 5'-phosphomonoester.</text>
        <dbReference type="EC" id="3.1.26.3"/>
    </reaction>
</comment>
<comment type="cofactor">
    <cofactor evidence="1">
        <name>Mg(2+)</name>
        <dbReference type="ChEBI" id="CHEBI:18420"/>
    </cofactor>
</comment>
<comment type="subunit">
    <text evidence="1">Homodimer.</text>
</comment>
<comment type="subcellular location">
    <subcellularLocation>
        <location evidence="1">Cytoplasm</location>
    </subcellularLocation>
</comment>
<comment type="similarity">
    <text evidence="1">Belongs to the ribonuclease III family.</text>
</comment>
<proteinExistence type="inferred from homology"/>
<sequence>MNPIVINRLQRKLGYTFNHQELLQQALTHRSASSKHNERLEFLGDSILSYVIANALYHRFPRVDEGDMSRMRATLVRGNTLAELAREFELGECLRLGPGELKSGGFRRESILADTVEALIGGVFLDSDIQTVEKLILNWYQTRLDEISPGDKQKDPKTRLQEYLQGRHLPLPTYLVVQVRGEAHDQEFTIHCQVSGLSEPVVGTGSSRRKAEQAAAEQALKKLELE</sequence>
<protein>
    <recommendedName>
        <fullName evidence="1">Ribonuclease 3</fullName>
        <ecNumber evidence="1">3.1.26.3</ecNumber>
    </recommendedName>
    <alternativeName>
        <fullName evidence="1">Ribonuclease III</fullName>
        <shortName evidence="1">RNase III</shortName>
    </alternativeName>
</protein>
<feature type="chain" id="PRO_1000094108" description="Ribonuclease 3">
    <location>
        <begin position="1"/>
        <end position="226"/>
    </location>
</feature>
<feature type="domain" description="RNase III" evidence="1">
    <location>
        <begin position="6"/>
        <end position="128"/>
    </location>
</feature>
<feature type="domain" description="DRBM" evidence="1">
    <location>
        <begin position="155"/>
        <end position="225"/>
    </location>
</feature>
<feature type="active site" evidence="1">
    <location>
        <position position="45"/>
    </location>
</feature>
<feature type="active site" evidence="1">
    <location>
        <position position="117"/>
    </location>
</feature>
<feature type="binding site" evidence="1">
    <location>
        <position position="41"/>
    </location>
    <ligand>
        <name>Mg(2+)</name>
        <dbReference type="ChEBI" id="CHEBI:18420"/>
    </ligand>
</feature>
<feature type="binding site" evidence="1">
    <location>
        <position position="114"/>
    </location>
    <ligand>
        <name>Mg(2+)</name>
        <dbReference type="ChEBI" id="CHEBI:18420"/>
    </ligand>
</feature>
<feature type="binding site" evidence="1">
    <location>
        <position position="117"/>
    </location>
    <ligand>
        <name>Mg(2+)</name>
        <dbReference type="ChEBI" id="CHEBI:18420"/>
    </ligand>
</feature>
<organism>
    <name type="scientific">Escherichia coli (strain K12 / DH10B)</name>
    <dbReference type="NCBI Taxonomy" id="316385"/>
    <lineage>
        <taxon>Bacteria</taxon>
        <taxon>Pseudomonadati</taxon>
        <taxon>Pseudomonadota</taxon>
        <taxon>Gammaproteobacteria</taxon>
        <taxon>Enterobacterales</taxon>
        <taxon>Enterobacteriaceae</taxon>
        <taxon>Escherichia</taxon>
    </lineage>
</organism>
<name>RNC_ECODH</name>
<accession>B1XB41</accession>